<accession>Q496M5</accession>
<accession>B3KNR4</accession>
<accession>Q1ZYM0</accession>
<organism>
    <name type="scientific">Homo sapiens</name>
    <name type="common">Human</name>
    <dbReference type="NCBI Taxonomy" id="9606"/>
    <lineage>
        <taxon>Eukaryota</taxon>
        <taxon>Metazoa</taxon>
        <taxon>Chordata</taxon>
        <taxon>Craniata</taxon>
        <taxon>Vertebrata</taxon>
        <taxon>Euteleostomi</taxon>
        <taxon>Mammalia</taxon>
        <taxon>Eutheria</taxon>
        <taxon>Euarchontoglires</taxon>
        <taxon>Primates</taxon>
        <taxon>Haplorrhini</taxon>
        <taxon>Catarrhini</taxon>
        <taxon>Hominidae</taxon>
        <taxon>Homo</taxon>
    </lineage>
</organism>
<evidence type="ECO:0000250" key="1"/>
<evidence type="ECO:0000255" key="2">
    <source>
        <dbReference type="PROSITE-ProRule" id="PRU00154"/>
    </source>
</evidence>
<evidence type="ECO:0000255" key="3">
    <source>
        <dbReference type="PROSITE-ProRule" id="PRU00159"/>
    </source>
</evidence>
<evidence type="ECO:0000256" key="4">
    <source>
        <dbReference type="SAM" id="MobiDB-lite"/>
    </source>
</evidence>
<evidence type="ECO:0000269" key="5">
    <source>
    </source>
</evidence>
<evidence type="ECO:0000303" key="6">
    <source ref="2"/>
</evidence>
<evidence type="ECO:0000305" key="7"/>
<feature type="chain" id="PRO_0000280397" description="Inactive serine/threonine-protein kinase PLK5">
    <location>
        <begin position="1"/>
        <end position="336"/>
    </location>
</feature>
<feature type="domain" description="Protein kinase; truncated" evidence="3">
    <location>
        <begin position="1"/>
        <end position="65"/>
    </location>
</feature>
<feature type="domain" description="POLO box" evidence="2">
    <location>
        <begin position="255"/>
        <end position="336"/>
    </location>
</feature>
<feature type="region of interest" description="Disordered" evidence="4">
    <location>
        <begin position="109"/>
        <end position="135"/>
    </location>
</feature>
<feature type="region of interest" description="Disordered" evidence="4">
    <location>
        <begin position="224"/>
        <end position="245"/>
    </location>
</feature>
<feature type="splice variant" id="VSP_023654" description="In isoform 2." evidence="6">
    <location>
        <begin position="239"/>
        <end position="275"/>
    </location>
</feature>
<feature type="sequence conflict" description="In Ref. 1; BAG51426 and 4; BC100791." evidence="7" ref="1 4">
    <original>R</original>
    <variation>Q</variation>
    <location>
        <position position="314"/>
    </location>
</feature>
<feature type="sequence conflict" description="In Ref. 2; ABD83663." evidence="7" ref="2">
    <location>
        <position position="320"/>
    </location>
</feature>
<feature type="sequence conflict" description="In Ref. 2; ABD83663." evidence="7" ref="2">
    <original>G</original>
    <variation>R</variation>
    <location>
        <position position="323"/>
    </location>
</feature>
<protein>
    <recommendedName>
        <fullName>Inactive serine/threonine-protein kinase PLK5</fullName>
    </recommendedName>
    <alternativeName>
        <fullName>Polo-like kinase 5</fullName>
        <shortName>PLK-5</shortName>
    </alternativeName>
</protein>
<comment type="function">
    <text evidence="5">Inactive serine/threonine-protein kinase that plays a role in cell cycle progression and neuronal differentiation.</text>
</comment>
<comment type="subcellular location">
    <subcellularLocation>
        <location evidence="1">Nucleus</location>
        <location evidence="1">Nucleolus</location>
    </subcellularLocation>
    <subcellularLocation>
        <location evidence="5">Cytoplasm</location>
    </subcellularLocation>
</comment>
<comment type="alternative products">
    <event type="alternative splicing"/>
    <isoform>
        <id>Q496M5-1</id>
        <name>1</name>
        <sequence type="displayed"/>
    </isoform>
    <isoform>
        <id>Q496M5-2</id>
        <name>2</name>
        <sequence type="described" ref="VSP_023654"/>
    </isoform>
</comment>
<comment type="tissue specificity">
    <text evidence="5">Expressed in the brain, neurons and glial cells. Also expressed in highly differentiated cells, such as the serous acini in the parotid gland, distal and proximal tubules of the kidney, tubules of the seminal gland, Kupffer cells and some hepatocytes in the liver, and some cells in the germinal center of lymph nodes (at protein level).</text>
</comment>
<comment type="induction">
    <text evidence="5">Down-regulated in primary brain tumors.</text>
</comment>
<comment type="domain">
    <text>The truncated protein kinase domain is predicted to be catalytically inactive; has lost the main activatory autophosphorylation site and the conserved key residues involved in phospho-substrate. The C-terminal region (containing the POLO box domain) is sufficient for inducing cell cycle arrest.</text>
</comment>
<comment type="similarity">
    <text evidence="3">Belongs to the protein kinase superfamily. Ser/Thr protein kinase family. CDC5/Polo subfamily.</text>
</comment>
<dbReference type="EMBL" id="AK054808">
    <property type="protein sequence ID" value="BAG51426.1"/>
    <property type="molecule type" value="mRNA"/>
</dbReference>
<dbReference type="EMBL" id="DQ424898">
    <property type="protein sequence ID" value="ABD83663.1"/>
    <property type="molecule type" value="mRNA"/>
</dbReference>
<dbReference type="EMBL" id="AC027307">
    <property type="status" value="NOT_ANNOTATED_CDS"/>
    <property type="molecule type" value="Genomic_DNA"/>
</dbReference>
<dbReference type="EMBL" id="BC100791">
    <property type="status" value="NOT_ANNOTATED_CDS"/>
    <property type="molecule type" value="mRNA"/>
</dbReference>
<dbReference type="CCDS" id="CCDS59328.1">
    <molecule id="Q496M5-1"/>
</dbReference>
<dbReference type="RefSeq" id="NP_001230008.1">
    <molecule id="Q496M5-1"/>
    <property type="nucleotide sequence ID" value="NM_001243079.2"/>
</dbReference>
<dbReference type="SMR" id="Q496M5"/>
<dbReference type="BioGRID" id="125996">
    <property type="interactions" value="1"/>
</dbReference>
<dbReference type="FunCoup" id="Q496M5">
    <property type="interactions" value="55"/>
</dbReference>
<dbReference type="STRING" id="9606.ENSP00000468376"/>
<dbReference type="PhosphoSitePlus" id="Q496M5"/>
<dbReference type="BioMuta" id="PLK5"/>
<dbReference type="DMDM" id="308153664"/>
<dbReference type="PaxDb" id="9606-ENSP00000466248"/>
<dbReference type="PeptideAtlas" id="Q496M5"/>
<dbReference type="Antibodypedia" id="64895">
    <property type="antibodies" value="176 antibodies from 28 providers"/>
</dbReference>
<dbReference type="DNASU" id="126520"/>
<dbReference type="Ensembl" id="ENST00000334770.9">
    <molecule id="Q496M5-1"/>
    <property type="protein sequence ID" value="ENSP00000466248.1"/>
    <property type="gene ID" value="ENSG00000185988.15"/>
</dbReference>
<dbReference type="Ensembl" id="ENST00000454744.7">
    <molecule id="Q496M5-1"/>
    <property type="protein sequence ID" value="ENSP00000468376.1"/>
    <property type="gene ID" value="ENSG00000185988.15"/>
</dbReference>
<dbReference type="Ensembl" id="ENST00000588430.3">
    <molecule id="Q496M5-2"/>
    <property type="protein sequence ID" value="ENSP00000465896.2"/>
    <property type="gene ID" value="ENSG00000185988.15"/>
</dbReference>
<dbReference type="Ensembl" id="ENST00000673796.1">
    <molecule id="Q496M5-1"/>
    <property type="protein sequence ID" value="ENSP00000501198.1"/>
    <property type="gene ID" value="ENSG00000185988.15"/>
</dbReference>
<dbReference type="Ensembl" id="ENST00000673896.1">
    <molecule id="Q496M5-2"/>
    <property type="protein sequence ID" value="ENSP00000501063.1"/>
    <property type="gene ID" value="ENSG00000185988.15"/>
</dbReference>
<dbReference type="GeneID" id="126520"/>
<dbReference type="KEGG" id="hsa:126520"/>
<dbReference type="MANE-Select" id="ENST00000454744.7">
    <property type="protein sequence ID" value="ENSP00000468376.1"/>
    <property type="RefSeq nucleotide sequence ID" value="NM_001243079.2"/>
    <property type="RefSeq protein sequence ID" value="NP_001230008.1"/>
</dbReference>
<dbReference type="UCSC" id="uc002ltf.4">
    <molecule id="Q496M5-1"/>
    <property type="organism name" value="human"/>
</dbReference>
<dbReference type="AGR" id="HGNC:27001"/>
<dbReference type="CTD" id="126520"/>
<dbReference type="DisGeNET" id="126520"/>
<dbReference type="GeneCards" id="PLK5"/>
<dbReference type="HGNC" id="HGNC:27001">
    <property type="gene designation" value="PLK5"/>
</dbReference>
<dbReference type="HPA" id="ENSG00000185988">
    <property type="expression patterns" value="Tissue enhanced (brain, cervix)"/>
</dbReference>
<dbReference type="MIM" id="621048">
    <property type="type" value="gene"/>
</dbReference>
<dbReference type="neXtProt" id="NX_Q496M5"/>
<dbReference type="OpenTargets" id="ENSG00000185988"/>
<dbReference type="VEuPathDB" id="HostDB:ENSG00000185988"/>
<dbReference type="eggNOG" id="KOG0575">
    <property type="taxonomic scope" value="Eukaryota"/>
</dbReference>
<dbReference type="GeneTree" id="ENSGT00940000162321"/>
<dbReference type="HOGENOM" id="CLU_830408_0_0_1"/>
<dbReference type="InParanoid" id="Q496M5"/>
<dbReference type="OMA" id="HLQHAIH"/>
<dbReference type="OrthoDB" id="408964at2759"/>
<dbReference type="PAN-GO" id="Q496M5">
    <property type="GO annotations" value="9 GO annotations based on evolutionary models"/>
</dbReference>
<dbReference type="PhylomeDB" id="Q496M5"/>
<dbReference type="PathwayCommons" id="Q496M5"/>
<dbReference type="BioGRID-ORCS" id="126520">
    <property type="hits" value="10 hits in 1135 CRISPR screens"/>
</dbReference>
<dbReference type="ChiTaRS" id="PLK5">
    <property type="organism name" value="human"/>
</dbReference>
<dbReference type="GenomeRNAi" id="126520"/>
<dbReference type="Pharos" id="Q496M5">
    <property type="development level" value="Tbio"/>
</dbReference>
<dbReference type="PRO" id="PR:Q496M5"/>
<dbReference type="Proteomes" id="UP000005640">
    <property type="component" value="Chromosome 19"/>
</dbReference>
<dbReference type="RNAct" id="Q496M5">
    <property type="molecule type" value="protein"/>
</dbReference>
<dbReference type="Bgee" id="ENSG00000185988">
    <property type="expression patterns" value="Expressed in right hemisphere of cerebellum and 92 other cell types or tissues"/>
</dbReference>
<dbReference type="ExpressionAtlas" id="Q496M5">
    <property type="expression patterns" value="baseline and differential"/>
</dbReference>
<dbReference type="GO" id="GO:0005813">
    <property type="term" value="C:centrosome"/>
    <property type="evidence" value="ECO:0000318"/>
    <property type="project" value="GO_Central"/>
</dbReference>
<dbReference type="GO" id="GO:0005737">
    <property type="term" value="C:cytoplasm"/>
    <property type="evidence" value="ECO:0000314"/>
    <property type="project" value="UniProtKB"/>
</dbReference>
<dbReference type="GO" id="GO:0000776">
    <property type="term" value="C:kinetochore"/>
    <property type="evidence" value="ECO:0000318"/>
    <property type="project" value="GO_Central"/>
</dbReference>
<dbReference type="GO" id="GO:0005730">
    <property type="term" value="C:nucleolus"/>
    <property type="evidence" value="ECO:0007669"/>
    <property type="project" value="UniProtKB-SubCell"/>
</dbReference>
<dbReference type="GO" id="GO:0005634">
    <property type="term" value="C:nucleus"/>
    <property type="evidence" value="ECO:0000318"/>
    <property type="project" value="GO_Central"/>
</dbReference>
<dbReference type="GO" id="GO:0000922">
    <property type="term" value="C:spindle pole"/>
    <property type="evidence" value="ECO:0000318"/>
    <property type="project" value="GO_Central"/>
</dbReference>
<dbReference type="GO" id="GO:0005524">
    <property type="term" value="F:ATP binding"/>
    <property type="evidence" value="ECO:0007669"/>
    <property type="project" value="InterPro"/>
</dbReference>
<dbReference type="GO" id="GO:0004672">
    <property type="term" value="F:protein kinase activity"/>
    <property type="evidence" value="ECO:0007669"/>
    <property type="project" value="InterPro"/>
</dbReference>
<dbReference type="GO" id="GO:0030154">
    <property type="term" value="P:cell differentiation"/>
    <property type="evidence" value="ECO:0007669"/>
    <property type="project" value="UniProtKB-KW"/>
</dbReference>
<dbReference type="GO" id="GO:0051301">
    <property type="term" value="P:cell division"/>
    <property type="evidence" value="ECO:0007669"/>
    <property type="project" value="UniProtKB-KW"/>
</dbReference>
<dbReference type="GO" id="GO:0071363">
    <property type="term" value="P:cellular response to growth factor stimulus"/>
    <property type="evidence" value="ECO:0000314"/>
    <property type="project" value="UniProtKB"/>
</dbReference>
<dbReference type="GO" id="GO:0002357">
    <property type="term" value="P:defense response to tumor cell"/>
    <property type="evidence" value="ECO:0000314"/>
    <property type="project" value="UniProtKB"/>
</dbReference>
<dbReference type="GO" id="GO:0006974">
    <property type="term" value="P:DNA damage response"/>
    <property type="evidence" value="ECO:0000318"/>
    <property type="project" value="GO_Central"/>
</dbReference>
<dbReference type="GO" id="GO:0007052">
    <property type="term" value="P:mitotic spindle organization"/>
    <property type="evidence" value="ECO:0000318"/>
    <property type="project" value="GO_Central"/>
</dbReference>
<dbReference type="GO" id="GO:0010976">
    <property type="term" value="P:positive regulation of neuron projection development"/>
    <property type="evidence" value="ECO:0000314"/>
    <property type="project" value="UniProtKB"/>
</dbReference>
<dbReference type="GO" id="GO:0042981">
    <property type="term" value="P:regulation of apoptotic process"/>
    <property type="evidence" value="ECO:0000315"/>
    <property type="project" value="UniProtKB"/>
</dbReference>
<dbReference type="GO" id="GO:2000045">
    <property type="term" value="P:regulation of G1/S transition of mitotic cell cycle"/>
    <property type="evidence" value="ECO:0000315"/>
    <property type="project" value="UniProtKB"/>
</dbReference>
<dbReference type="CDD" id="cd13118">
    <property type="entry name" value="POLO_box_1"/>
    <property type="match status" value="1"/>
</dbReference>
<dbReference type="FunFam" id="1.10.510.10:FF:000631">
    <property type="entry name" value="Polo like kinase 5"/>
    <property type="match status" value="1"/>
</dbReference>
<dbReference type="FunFam" id="3.30.1120.30:FF:000006">
    <property type="entry name" value="Polo like kinase 5"/>
    <property type="match status" value="1"/>
</dbReference>
<dbReference type="FunFam" id="3.30.1120.30:FF:000007">
    <property type="entry name" value="Polo like kinase 5"/>
    <property type="match status" value="1"/>
</dbReference>
<dbReference type="FunFam" id="3.30.1120.30:FF:000012">
    <property type="entry name" value="Serine/threonine-protein kinase PLK"/>
    <property type="match status" value="1"/>
</dbReference>
<dbReference type="Gene3D" id="3.30.1120.30">
    <property type="entry name" value="POLO box domain"/>
    <property type="match status" value="2"/>
</dbReference>
<dbReference type="Gene3D" id="1.10.510.10">
    <property type="entry name" value="Transferase(Phosphotransferase) domain 1"/>
    <property type="match status" value="1"/>
</dbReference>
<dbReference type="InterPro" id="IPR011009">
    <property type="entry name" value="Kinase-like_dom_sf"/>
</dbReference>
<dbReference type="InterPro" id="IPR033701">
    <property type="entry name" value="POLO_box_1"/>
</dbReference>
<dbReference type="InterPro" id="IPR000959">
    <property type="entry name" value="POLO_box_dom"/>
</dbReference>
<dbReference type="InterPro" id="IPR036947">
    <property type="entry name" value="POLO_box_dom_sf"/>
</dbReference>
<dbReference type="InterPro" id="IPR000719">
    <property type="entry name" value="Prot_kinase_dom"/>
</dbReference>
<dbReference type="PANTHER" id="PTHR24345:SF43">
    <property type="entry name" value="INACTIVE SERINE_THREONINE-PROTEIN KINASE PLK5"/>
    <property type="match status" value="1"/>
</dbReference>
<dbReference type="PANTHER" id="PTHR24345">
    <property type="entry name" value="SERINE/THREONINE-PROTEIN KINASE PLK"/>
    <property type="match status" value="1"/>
</dbReference>
<dbReference type="SUPFAM" id="SSF82615">
    <property type="entry name" value="Polo-box domain"/>
    <property type="match status" value="2"/>
</dbReference>
<dbReference type="SUPFAM" id="SSF56112">
    <property type="entry name" value="Protein kinase-like (PK-like)"/>
    <property type="match status" value="1"/>
</dbReference>
<dbReference type="PROSITE" id="PS50078">
    <property type="entry name" value="POLO_BOX"/>
    <property type="match status" value="1"/>
</dbReference>
<dbReference type="PROSITE" id="PS50011">
    <property type="entry name" value="PROTEIN_KINASE_DOM"/>
    <property type="match status" value="1"/>
</dbReference>
<name>PLK5_HUMAN</name>
<gene>
    <name type="primary">PLK5</name>
    <name type="synonym">PLK5P</name>
    <name type="ORF">FG060302</name>
</gene>
<sequence length="336" mass="36329">MYTVLTGTPPFMASPLSEMYQNIREGHYPEPAHLSANARRLIVHLLAPNPAERPSLDHLLQDDFFTQGFTPDRLPAHSCHSPPIFAIPPPLGRIFRKVGQRLLTQCRPPCPFTPKEASGPGEGGPDPDSMEWDGESSLSAKEVPCLEGPIHLVAQGTLQSDLAGPEGSRRPEVEAALRHLQLCLDVGPPATQDPLGEQQPILWAPKWVDYSSKYGFGYQLLDGGRTGRHPHGPATPRREGTLPTPVPPAGPGLCLLRFLASEHALLLLFSNGMVQVSFSGVPAQLVLSGEGEGLQLTLWEQGSPGTSYSLDVPRSHGCAPTTGQHLHHALRMLQSI</sequence>
<reference key="1">
    <citation type="journal article" date="2004" name="Nat. Genet.">
        <title>Complete sequencing and characterization of 21,243 full-length human cDNAs.</title>
        <authorList>
            <person name="Ota T."/>
            <person name="Suzuki Y."/>
            <person name="Nishikawa T."/>
            <person name="Otsuki T."/>
            <person name="Sugiyama T."/>
            <person name="Irie R."/>
            <person name="Wakamatsu A."/>
            <person name="Hayashi K."/>
            <person name="Sato H."/>
            <person name="Nagai K."/>
            <person name="Kimura K."/>
            <person name="Makita H."/>
            <person name="Sekine M."/>
            <person name="Obayashi M."/>
            <person name="Nishi T."/>
            <person name="Shibahara T."/>
            <person name="Tanaka T."/>
            <person name="Ishii S."/>
            <person name="Yamamoto J."/>
            <person name="Saito K."/>
            <person name="Kawai Y."/>
            <person name="Isono Y."/>
            <person name="Nakamura Y."/>
            <person name="Nagahari K."/>
            <person name="Murakami K."/>
            <person name="Yasuda T."/>
            <person name="Iwayanagi T."/>
            <person name="Wagatsuma M."/>
            <person name="Shiratori A."/>
            <person name="Sudo H."/>
            <person name="Hosoiri T."/>
            <person name="Kaku Y."/>
            <person name="Kodaira H."/>
            <person name="Kondo H."/>
            <person name="Sugawara M."/>
            <person name="Takahashi M."/>
            <person name="Kanda K."/>
            <person name="Yokoi T."/>
            <person name="Furuya T."/>
            <person name="Kikkawa E."/>
            <person name="Omura Y."/>
            <person name="Abe K."/>
            <person name="Kamihara K."/>
            <person name="Katsuta N."/>
            <person name="Sato K."/>
            <person name="Tanikawa M."/>
            <person name="Yamazaki M."/>
            <person name="Ninomiya K."/>
            <person name="Ishibashi T."/>
            <person name="Yamashita H."/>
            <person name="Murakawa K."/>
            <person name="Fujimori K."/>
            <person name="Tanai H."/>
            <person name="Kimata M."/>
            <person name="Watanabe M."/>
            <person name="Hiraoka S."/>
            <person name="Chiba Y."/>
            <person name="Ishida S."/>
            <person name="Ono Y."/>
            <person name="Takiguchi S."/>
            <person name="Watanabe S."/>
            <person name="Yosida M."/>
            <person name="Hotuta T."/>
            <person name="Kusano J."/>
            <person name="Kanehori K."/>
            <person name="Takahashi-Fujii A."/>
            <person name="Hara H."/>
            <person name="Tanase T.-O."/>
            <person name="Nomura Y."/>
            <person name="Togiya S."/>
            <person name="Komai F."/>
            <person name="Hara R."/>
            <person name="Takeuchi K."/>
            <person name="Arita M."/>
            <person name="Imose N."/>
            <person name="Musashino K."/>
            <person name="Yuuki H."/>
            <person name="Oshima A."/>
            <person name="Sasaki N."/>
            <person name="Aotsuka S."/>
            <person name="Yoshikawa Y."/>
            <person name="Matsunawa H."/>
            <person name="Ichihara T."/>
            <person name="Shiohata N."/>
            <person name="Sano S."/>
            <person name="Moriya S."/>
            <person name="Momiyama H."/>
            <person name="Satoh N."/>
            <person name="Takami S."/>
            <person name="Terashima Y."/>
            <person name="Suzuki O."/>
            <person name="Nakagawa S."/>
            <person name="Senoh A."/>
            <person name="Mizoguchi H."/>
            <person name="Goto Y."/>
            <person name="Shimizu F."/>
            <person name="Wakebe H."/>
            <person name="Hishigaki H."/>
            <person name="Watanabe T."/>
            <person name="Sugiyama A."/>
            <person name="Takemoto M."/>
            <person name="Kawakami B."/>
            <person name="Yamazaki M."/>
            <person name="Watanabe K."/>
            <person name="Kumagai A."/>
            <person name="Itakura S."/>
            <person name="Fukuzumi Y."/>
            <person name="Fujimori Y."/>
            <person name="Komiyama M."/>
            <person name="Tashiro H."/>
            <person name="Tanigami A."/>
            <person name="Fujiwara T."/>
            <person name="Ono T."/>
            <person name="Yamada K."/>
            <person name="Fujii Y."/>
            <person name="Ozaki K."/>
            <person name="Hirao M."/>
            <person name="Ohmori Y."/>
            <person name="Kawabata A."/>
            <person name="Hikiji T."/>
            <person name="Kobatake N."/>
            <person name="Inagaki H."/>
            <person name="Ikema Y."/>
            <person name="Okamoto S."/>
            <person name="Okitani R."/>
            <person name="Kawakami T."/>
            <person name="Noguchi S."/>
            <person name="Itoh T."/>
            <person name="Shigeta K."/>
            <person name="Senba T."/>
            <person name="Matsumura K."/>
            <person name="Nakajima Y."/>
            <person name="Mizuno T."/>
            <person name="Morinaga M."/>
            <person name="Sasaki M."/>
            <person name="Togashi T."/>
            <person name="Oyama M."/>
            <person name="Hata H."/>
            <person name="Watanabe M."/>
            <person name="Komatsu T."/>
            <person name="Mizushima-Sugano J."/>
            <person name="Satoh T."/>
            <person name="Shirai Y."/>
            <person name="Takahashi Y."/>
            <person name="Nakagawa K."/>
            <person name="Okumura K."/>
            <person name="Nagase T."/>
            <person name="Nomura N."/>
            <person name="Kikuchi H."/>
            <person name="Masuho Y."/>
            <person name="Yamashita R."/>
            <person name="Nakai K."/>
            <person name="Yada T."/>
            <person name="Nakamura Y."/>
            <person name="Ohara O."/>
            <person name="Isogai T."/>
            <person name="Sugano S."/>
        </authorList>
    </citation>
    <scope>NUCLEOTIDE SEQUENCE [LARGE SCALE MRNA] (ISOFORM 1)</scope>
    <source>
        <tissue>Cerebellum</tissue>
    </source>
</reference>
<reference key="2">
    <citation type="submission" date="2006-03" db="EMBL/GenBank/DDBJ databases">
        <authorList>
            <person name="Li H."/>
            <person name="Nong W."/>
            <person name="Zhou G."/>
            <person name="Ke R."/>
            <person name="Shen C."/>
            <person name="Zhong G."/>
            <person name="Liang M."/>
            <person name="Tang Z."/>
            <person name="Huang B."/>
            <person name="Lin L."/>
            <person name="Yang S."/>
        </authorList>
    </citation>
    <scope>NUCLEOTIDE SEQUENCE [LARGE SCALE MRNA] (ISOFORM 2)</scope>
</reference>
<reference key="3">
    <citation type="journal article" date="2004" name="Nature">
        <title>The DNA sequence and biology of human chromosome 19.</title>
        <authorList>
            <person name="Grimwood J."/>
            <person name="Gordon L.A."/>
            <person name="Olsen A.S."/>
            <person name="Terry A."/>
            <person name="Schmutz J."/>
            <person name="Lamerdin J.E."/>
            <person name="Hellsten U."/>
            <person name="Goodstein D."/>
            <person name="Couronne O."/>
            <person name="Tran-Gyamfi M."/>
            <person name="Aerts A."/>
            <person name="Altherr M."/>
            <person name="Ashworth L."/>
            <person name="Bajorek E."/>
            <person name="Black S."/>
            <person name="Branscomb E."/>
            <person name="Caenepeel S."/>
            <person name="Carrano A.V."/>
            <person name="Caoile C."/>
            <person name="Chan Y.M."/>
            <person name="Christensen M."/>
            <person name="Cleland C.A."/>
            <person name="Copeland A."/>
            <person name="Dalin E."/>
            <person name="Dehal P."/>
            <person name="Denys M."/>
            <person name="Detter J.C."/>
            <person name="Escobar J."/>
            <person name="Flowers D."/>
            <person name="Fotopulos D."/>
            <person name="Garcia C."/>
            <person name="Georgescu A.M."/>
            <person name="Glavina T."/>
            <person name="Gomez M."/>
            <person name="Gonzales E."/>
            <person name="Groza M."/>
            <person name="Hammon N."/>
            <person name="Hawkins T."/>
            <person name="Haydu L."/>
            <person name="Ho I."/>
            <person name="Huang W."/>
            <person name="Israni S."/>
            <person name="Jett J."/>
            <person name="Kadner K."/>
            <person name="Kimball H."/>
            <person name="Kobayashi A."/>
            <person name="Larionov V."/>
            <person name="Leem S.-H."/>
            <person name="Lopez F."/>
            <person name="Lou Y."/>
            <person name="Lowry S."/>
            <person name="Malfatti S."/>
            <person name="Martinez D."/>
            <person name="McCready P.M."/>
            <person name="Medina C."/>
            <person name="Morgan J."/>
            <person name="Nelson K."/>
            <person name="Nolan M."/>
            <person name="Ovcharenko I."/>
            <person name="Pitluck S."/>
            <person name="Pollard M."/>
            <person name="Popkie A.P."/>
            <person name="Predki P."/>
            <person name="Quan G."/>
            <person name="Ramirez L."/>
            <person name="Rash S."/>
            <person name="Retterer J."/>
            <person name="Rodriguez A."/>
            <person name="Rogers S."/>
            <person name="Salamov A."/>
            <person name="Salazar A."/>
            <person name="She X."/>
            <person name="Smith D."/>
            <person name="Slezak T."/>
            <person name="Solovyev V."/>
            <person name="Thayer N."/>
            <person name="Tice H."/>
            <person name="Tsai M."/>
            <person name="Ustaszewska A."/>
            <person name="Vo N."/>
            <person name="Wagner M."/>
            <person name="Wheeler J."/>
            <person name="Wu K."/>
            <person name="Xie G."/>
            <person name="Yang J."/>
            <person name="Dubchak I."/>
            <person name="Furey T.S."/>
            <person name="DeJong P."/>
            <person name="Dickson M."/>
            <person name="Gordon D."/>
            <person name="Eichler E.E."/>
            <person name="Pennacchio L.A."/>
            <person name="Richardson P."/>
            <person name="Stubbs L."/>
            <person name="Rokhsar D.S."/>
            <person name="Myers R.M."/>
            <person name="Rubin E.M."/>
            <person name="Lucas S.M."/>
        </authorList>
    </citation>
    <scope>NUCLEOTIDE SEQUENCE [LARGE SCALE GENOMIC DNA]</scope>
</reference>
<reference key="4">
    <citation type="journal article" date="2004" name="Genome Res.">
        <title>The status, quality, and expansion of the NIH full-length cDNA project: the Mammalian Gene Collection (MGC).</title>
        <authorList>
            <consortium name="The MGC Project Team"/>
        </authorList>
    </citation>
    <scope>NUCLEOTIDE SEQUENCE [LARGE SCALE MRNA] (ISOFORM 1)</scope>
</reference>
<reference key="5">
    <citation type="journal article" date="2011" name="Mol. Cell. Biol.">
        <title>Plk5, a polo box domain-only protein with specific roles in neuron differentiation and glioblastoma suppression.</title>
        <authorList>
            <person name="de Carcer G."/>
            <person name="Escobar B."/>
            <person name="Higuero A.M."/>
            <person name="Garcia L."/>
            <person name="Anson A."/>
            <person name="Perez G."/>
            <person name="Mollejo M."/>
            <person name="Manning G."/>
            <person name="Melendez B."/>
            <person name="Abad-Rodriguez J."/>
            <person name="Malumbres M."/>
        </authorList>
    </citation>
    <scope>FUNCTION</scope>
    <scope>INDUCTION</scope>
    <scope>SUBCELLULAR LOCATION</scope>
    <scope>TISSUE SPECIFICITY</scope>
</reference>
<proteinExistence type="evidence at protein level"/>
<keyword id="KW-0025">Alternative splicing</keyword>
<keyword id="KW-0131">Cell cycle</keyword>
<keyword id="KW-0132">Cell division</keyword>
<keyword id="KW-0963">Cytoplasm</keyword>
<keyword id="KW-0221">Differentiation</keyword>
<keyword id="KW-0498">Mitosis</keyword>
<keyword id="KW-0539">Nucleus</keyword>
<keyword id="KW-1267">Proteomics identification</keyword>
<keyword id="KW-1185">Reference proteome</keyword>